<keyword id="KW-0067">ATP-binding</keyword>
<keyword id="KW-0963">Cytoplasm</keyword>
<keyword id="KW-0227">DNA damage</keyword>
<keyword id="KW-0233">DNA recombination</keyword>
<keyword id="KW-0234">DNA repair</keyword>
<keyword id="KW-0238">DNA-binding</keyword>
<keyword id="KW-0547">Nucleotide-binding</keyword>
<keyword id="KW-1185">Reference proteome</keyword>
<keyword id="KW-0742">SOS response</keyword>
<protein>
    <recommendedName>
        <fullName evidence="1">Protein RecA</fullName>
    </recommendedName>
    <alternativeName>
        <fullName evidence="1">Recombinase A</fullName>
    </alternativeName>
</protein>
<gene>
    <name evidence="1" type="primary">recA</name>
    <name type="ordered locus">CE1849</name>
</gene>
<organism>
    <name type="scientific">Corynebacterium efficiens (strain DSM 44549 / YS-314 / AJ 12310 / JCM 11189 / NBRC 100395)</name>
    <dbReference type="NCBI Taxonomy" id="196164"/>
    <lineage>
        <taxon>Bacteria</taxon>
        <taxon>Bacillati</taxon>
        <taxon>Actinomycetota</taxon>
        <taxon>Actinomycetes</taxon>
        <taxon>Mycobacteriales</taxon>
        <taxon>Corynebacteriaceae</taxon>
        <taxon>Corynebacterium</taxon>
    </lineage>
</organism>
<accession>Q8FPD3</accession>
<comment type="function">
    <text evidence="1">Can catalyze the hydrolysis of ATP in the presence of single-stranded DNA, the ATP-dependent uptake of single-stranded DNA by duplex DNA, and the ATP-dependent hybridization of homologous single-stranded DNAs. It interacts with LexA causing its activation and leading to its autocatalytic cleavage.</text>
</comment>
<comment type="subcellular location">
    <subcellularLocation>
        <location evidence="1">Cytoplasm</location>
    </subcellularLocation>
</comment>
<comment type="similarity">
    <text evidence="1">Belongs to the RecA family.</text>
</comment>
<evidence type="ECO:0000255" key="1">
    <source>
        <dbReference type="HAMAP-Rule" id="MF_00268"/>
    </source>
</evidence>
<evidence type="ECO:0000256" key="2">
    <source>
        <dbReference type="SAM" id="MobiDB-lite"/>
    </source>
</evidence>
<name>RECA_COREF</name>
<dbReference type="EMBL" id="BA000035">
    <property type="protein sequence ID" value="BAC18659.1"/>
    <property type="molecule type" value="Genomic_DNA"/>
</dbReference>
<dbReference type="RefSeq" id="WP_011075641.1">
    <property type="nucleotide sequence ID" value="NC_004369.1"/>
</dbReference>
<dbReference type="SMR" id="Q8FPD3"/>
<dbReference type="STRING" id="196164.gene:10742277"/>
<dbReference type="KEGG" id="cef:CE1849"/>
<dbReference type="eggNOG" id="COG0468">
    <property type="taxonomic scope" value="Bacteria"/>
</dbReference>
<dbReference type="HOGENOM" id="CLU_040469_3_2_11"/>
<dbReference type="OrthoDB" id="9776733at2"/>
<dbReference type="Proteomes" id="UP000001409">
    <property type="component" value="Chromosome"/>
</dbReference>
<dbReference type="GO" id="GO:0005829">
    <property type="term" value="C:cytosol"/>
    <property type="evidence" value="ECO:0007669"/>
    <property type="project" value="TreeGrafter"/>
</dbReference>
<dbReference type="GO" id="GO:0005524">
    <property type="term" value="F:ATP binding"/>
    <property type="evidence" value="ECO:0007669"/>
    <property type="project" value="UniProtKB-UniRule"/>
</dbReference>
<dbReference type="GO" id="GO:0016887">
    <property type="term" value="F:ATP hydrolysis activity"/>
    <property type="evidence" value="ECO:0007669"/>
    <property type="project" value="InterPro"/>
</dbReference>
<dbReference type="GO" id="GO:0140664">
    <property type="term" value="F:ATP-dependent DNA damage sensor activity"/>
    <property type="evidence" value="ECO:0007669"/>
    <property type="project" value="InterPro"/>
</dbReference>
<dbReference type="GO" id="GO:0003684">
    <property type="term" value="F:damaged DNA binding"/>
    <property type="evidence" value="ECO:0007669"/>
    <property type="project" value="UniProtKB-UniRule"/>
</dbReference>
<dbReference type="GO" id="GO:0003697">
    <property type="term" value="F:single-stranded DNA binding"/>
    <property type="evidence" value="ECO:0007669"/>
    <property type="project" value="UniProtKB-UniRule"/>
</dbReference>
<dbReference type="GO" id="GO:0006310">
    <property type="term" value="P:DNA recombination"/>
    <property type="evidence" value="ECO:0007669"/>
    <property type="project" value="UniProtKB-UniRule"/>
</dbReference>
<dbReference type="GO" id="GO:0006281">
    <property type="term" value="P:DNA repair"/>
    <property type="evidence" value="ECO:0007669"/>
    <property type="project" value="UniProtKB-UniRule"/>
</dbReference>
<dbReference type="GO" id="GO:0009432">
    <property type="term" value="P:SOS response"/>
    <property type="evidence" value="ECO:0007669"/>
    <property type="project" value="UniProtKB-UniRule"/>
</dbReference>
<dbReference type="CDD" id="cd00983">
    <property type="entry name" value="RecA"/>
    <property type="match status" value="1"/>
</dbReference>
<dbReference type="FunFam" id="3.40.50.300:FF:000087">
    <property type="entry name" value="Recombinase RecA"/>
    <property type="match status" value="1"/>
</dbReference>
<dbReference type="Gene3D" id="3.40.50.300">
    <property type="entry name" value="P-loop containing nucleotide triphosphate hydrolases"/>
    <property type="match status" value="1"/>
</dbReference>
<dbReference type="HAMAP" id="MF_00268">
    <property type="entry name" value="RecA"/>
    <property type="match status" value="1"/>
</dbReference>
<dbReference type="InterPro" id="IPR003593">
    <property type="entry name" value="AAA+_ATPase"/>
</dbReference>
<dbReference type="InterPro" id="IPR013765">
    <property type="entry name" value="DNA_recomb/repair_RecA"/>
</dbReference>
<dbReference type="InterPro" id="IPR020584">
    <property type="entry name" value="DNA_recomb/repair_RecA_CS"/>
</dbReference>
<dbReference type="InterPro" id="IPR027417">
    <property type="entry name" value="P-loop_NTPase"/>
</dbReference>
<dbReference type="InterPro" id="IPR049261">
    <property type="entry name" value="RecA-like_C"/>
</dbReference>
<dbReference type="InterPro" id="IPR049428">
    <property type="entry name" value="RecA-like_N"/>
</dbReference>
<dbReference type="InterPro" id="IPR020588">
    <property type="entry name" value="RecA_ATP-bd"/>
</dbReference>
<dbReference type="InterPro" id="IPR023400">
    <property type="entry name" value="RecA_C_sf"/>
</dbReference>
<dbReference type="InterPro" id="IPR020587">
    <property type="entry name" value="RecA_monomer-monomer_interface"/>
</dbReference>
<dbReference type="NCBIfam" id="TIGR02012">
    <property type="entry name" value="tigrfam_recA"/>
    <property type="match status" value="1"/>
</dbReference>
<dbReference type="PANTHER" id="PTHR45900:SF1">
    <property type="entry name" value="MITOCHONDRIAL DNA REPAIR PROTEIN RECA HOMOLOG-RELATED"/>
    <property type="match status" value="1"/>
</dbReference>
<dbReference type="PANTHER" id="PTHR45900">
    <property type="entry name" value="RECA"/>
    <property type="match status" value="1"/>
</dbReference>
<dbReference type="Pfam" id="PF00154">
    <property type="entry name" value="RecA"/>
    <property type="match status" value="1"/>
</dbReference>
<dbReference type="Pfam" id="PF21096">
    <property type="entry name" value="RecA_C"/>
    <property type="match status" value="1"/>
</dbReference>
<dbReference type="PRINTS" id="PR00142">
    <property type="entry name" value="RECA"/>
</dbReference>
<dbReference type="SMART" id="SM00382">
    <property type="entry name" value="AAA"/>
    <property type="match status" value="1"/>
</dbReference>
<dbReference type="SUPFAM" id="SSF52540">
    <property type="entry name" value="P-loop containing nucleoside triphosphate hydrolases"/>
    <property type="match status" value="1"/>
</dbReference>
<dbReference type="SUPFAM" id="SSF54752">
    <property type="entry name" value="RecA protein, C-terminal domain"/>
    <property type="match status" value="1"/>
</dbReference>
<dbReference type="PROSITE" id="PS00321">
    <property type="entry name" value="RECA_1"/>
    <property type="match status" value="1"/>
</dbReference>
<dbReference type="PROSITE" id="PS50162">
    <property type="entry name" value="RECA_2"/>
    <property type="match status" value="1"/>
</dbReference>
<dbReference type="PROSITE" id="PS50163">
    <property type="entry name" value="RECA_3"/>
    <property type="match status" value="1"/>
</dbReference>
<proteinExistence type="inferred from homology"/>
<feature type="chain" id="PRO_0000122695" description="Protein RecA">
    <location>
        <begin position="1"/>
        <end position="386"/>
    </location>
</feature>
<feature type="region of interest" description="Disordered" evidence="2">
    <location>
        <begin position="362"/>
        <end position="386"/>
    </location>
</feature>
<feature type="binding site" evidence="1">
    <location>
        <begin position="76"/>
        <end position="83"/>
    </location>
    <ligand>
        <name>ATP</name>
        <dbReference type="ChEBI" id="CHEBI:30616"/>
    </ligand>
</feature>
<sequence>MATKKTTKAAPKGDDRQKALDAALALIEKDFGKGAVMRLGDENRPPIQVISSGNTALDIALGIGGFPRGRIVEVYGPESSGKTTVALHAIAQAQKAGGIAAFIDAEHALDPDYARKLGVDTDALLVSQPDTGEQALEIADMLVRSGAIDILVIDSVAALTPKAEIEGEMGDSHVGLQARLMSQALRKMTGALYNSGTTAIFINQLREKIGVMFGSPETTTGGKALKFYASVRIDVRRIQTLKDGQDAIGNRTRAKIVKNKVSPPFKIAEFDIIYGEGISRESSIIDLAVDNGIVKKSGSWFTYEGDQLGQGKEKARLFLKETPELADEIEEKIFRKLGVGKFAQTADELTDDPVELIPNVDFDDEDDDFDASTAPAGTFTEVTTEN</sequence>
<reference key="1">
    <citation type="journal article" date="2003" name="Genome Res.">
        <title>Comparative complete genome sequence analysis of the amino acid replacements responsible for the thermostability of Corynebacterium efficiens.</title>
        <authorList>
            <person name="Nishio Y."/>
            <person name="Nakamura Y."/>
            <person name="Kawarabayasi Y."/>
            <person name="Usuda Y."/>
            <person name="Kimura E."/>
            <person name="Sugimoto S."/>
            <person name="Matsui K."/>
            <person name="Yamagishi A."/>
            <person name="Kikuchi H."/>
            <person name="Ikeo K."/>
            <person name="Gojobori T."/>
        </authorList>
    </citation>
    <scope>NUCLEOTIDE SEQUENCE [LARGE SCALE GENOMIC DNA]</scope>
    <source>
        <strain>DSM 44549 / YS-314 / AJ 12310 / JCM 11189 / NBRC 100395</strain>
    </source>
</reference>